<organism>
    <name type="scientific">Dictyostelium discoideum</name>
    <name type="common">Social amoeba</name>
    <dbReference type="NCBI Taxonomy" id="44689"/>
    <lineage>
        <taxon>Eukaryota</taxon>
        <taxon>Amoebozoa</taxon>
        <taxon>Evosea</taxon>
        <taxon>Eumycetozoa</taxon>
        <taxon>Dictyostelia</taxon>
        <taxon>Dictyosteliales</taxon>
        <taxon>Dictyosteliaceae</taxon>
        <taxon>Dictyostelium</taxon>
    </lineage>
</organism>
<feature type="chain" id="PRO_0000318831" description="Probable cytochrome P450 518B1">
    <location>
        <begin position="1"/>
        <end position="490"/>
    </location>
</feature>
<feature type="transmembrane region" description="Helical" evidence="2">
    <location>
        <begin position="2"/>
        <end position="22"/>
    </location>
</feature>
<feature type="binding site" description="axial binding residue" evidence="1">
    <location>
        <position position="437"/>
    </location>
    <ligand>
        <name>heme</name>
        <dbReference type="ChEBI" id="CHEBI:30413"/>
    </ligand>
    <ligandPart>
        <name>Fe</name>
        <dbReference type="ChEBI" id="CHEBI:18248"/>
    </ligandPart>
</feature>
<name>C518B_DICDI</name>
<gene>
    <name type="primary">cyp518B1</name>
    <name type="ORF">DDB_G0275197</name>
</gene>
<accession>Q1ZXL2</accession>
<dbReference type="EC" id="1.14.-.-"/>
<dbReference type="EMBL" id="AAFI02000013">
    <property type="protein sequence ID" value="EAS66914.1"/>
    <property type="molecule type" value="Genomic_DNA"/>
</dbReference>
<dbReference type="RefSeq" id="XP_001134598.1">
    <property type="nucleotide sequence ID" value="XM_001134598.1"/>
</dbReference>
<dbReference type="SMR" id="Q1ZXL2"/>
<dbReference type="FunCoup" id="Q1ZXL2">
    <property type="interactions" value="1"/>
</dbReference>
<dbReference type="STRING" id="44689.Q1ZXL2"/>
<dbReference type="PaxDb" id="44689-DDB0233018"/>
<dbReference type="EnsemblProtists" id="EAS66914">
    <property type="protein sequence ID" value="EAS66914"/>
    <property type="gene ID" value="DDB_G0275197"/>
</dbReference>
<dbReference type="GeneID" id="8619863"/>
<dbReference type="KEGG" id="ddi:DDB_G0275197"/>
<dbReference type="dictyBase" id="DDB_G0275197">
    <property type="gene designation" value="cyp518B1"/>
</dbReference>
<dbReference type="VEuPathDB" id="AmoebaDB:DDB_G0275197"/>
<dbReference type="eggNOG" id="KOG0156">
    <property type="taxonomic scope" value="Eukaryota"/>
</dbReference>
<dbReference type="HOGENOM" id="CLU_001570_4_1_1"/>
<dbReference type="InParanoid" id="Q1ZXL2"/>
<dbReference type="OMA" id="QHELYIC"/>
<dbReference type="PhylomeDB" id="Q1ZXL2"/>
<dbReference type="Reactome" id="R-DDI-211935">
    <property type="pathway name" value="Fatty acids"/>
</dbReference>
<dbReference type="Reactome" id="R-DDI-211945">
    <property type="pathway name" value="Phase I - Functionalization of compounds"/>
</dbReference>
<dbReference type="Reactome" id="R-DDI-211958">
    <property type="pathway name" value="Miscellaneous substrates"/>
</dbReference>
<dbReference type="Reactome" id="R-DDI-211981">
    <property type="pathway name" value="Xenobiotics"/>
</dbReference>
<dbReference type="Reactome" id="R-DDI-211999">
    <property type="pathway name" value="CYP2E1 reactions"/>
</dbReference>
<dbReference type="Reactome" id="R-DDI-2142670">
    <property type="pathway name" value="Synthesis of epoxy (EET) and dihydroxyeicosatrienoic acids (DHET)"/>
</dbReference>
<dbReference type="Reactome" id="R-DDI-2142816">
    <property type="pathway name" value="Synthesis of (16-20)-hydroxyeicosatetraenoic acids (HETE)"/>
</dbReference>
<dbReference type="Reactome" id="R-DDI-5423646">
    <property type="pathway name" value="Aflatoxin activation and detoxification"/>
</dbReference>
<dbReference type="Reactome" id="R-DDI-9027307">
    <property type="pathway name" value="Biosynthesis of maresin-like SPMs"/>
</dbReference>
<dbReference type="Reactome" id="R-DDI-9749641">
    <property type="pathway name" value="Aspirin ADME"/>
</dbReference>
<dbReference type="Reactome" id="R-DDI-9753281">
    <property type="pathway name" value="Paracetamol ADME"/>
</dbReference>
<dbReference type="PRO" id="PR:Q1ZXL2"/>
<dbReference type="Proteomes" id="UP000002195">
    <property type="component" value="Chromosome 2"/>
</dbReference>
<dbReference type="GO" id="GO:0016020">
    <property type="term" value="C:membrane"/>
    <property type="evidence" value="ECO:0007669"/>
    <property type="project" value="UniProtKB-SubCell"/>
</dbReference>
<dbReference type="GO" id="GO:0020037">
    <property type="term" value="F:heme binding"/>
    <property type="evidence" value="ECO:0007669"/>
    <property type="project" value="InterPro"/>
</dbReference>
<dbReference type="GO" id="GO:0005506">
    <property type="term" value="F:iron ion binding"/>
    <property type="evidence" value="ECO:0007669"/>
    <property type="project" value="InterPro"/>
</dbReference>
<dbReference type="GO" id="GO:0004497">
    <property type="term" value="F:monooxygenase activity"/>
    <property type="evidence" value="ECO:0007669"/>
    <property type="project" value="UniProtKB-KW"/>
</dbReference>
<dbReference type="GO" id="GO:0016705">
    <property type="term" value="F:oxidoreductase activity, acting on paired donors, with incorporation or reduction of molecular oxygen"/>
    <property type="evidence" value="ECO:0007669"/>
    <property type="project" value="InterPro"/>
</dbReference>
<dbReference type="CDD" id="cd20617">
    <property type="entry name" value="CYP1_2-like"/>
    <property type="match status" value="1"/>
</dbReference>
<dbReference type="FunFam" id="1.10.630.10:FF:000068">
    <property type="entry name" value="Probable cytochrome P450 508A2"/>
    <property type="match status" value="1"/>
</dbReference>
<dbReference type="Gene3D" id="1.10.630.10">
    <property type="entry name" value="Cytochrome P450"/>
    <property type="match status" value="1"/>
</dbReference>
<dbReference type="InterPro" id="IPR001128">
    <property type="entry name" value="Cyt_P450"/>
</dbReference>
<dbReference type="InterPro" id="IPR002401">
    <property type="entry name" value="Cyt_P450_E_grp-I"/>
</dbReference>
<dbReference type="InterPro" id="IPR036396">
    <property type="entry name" value="Cyt_P450_sf"/>
</dbReference>
<dbReference type="InterPro" id="IPR050182">
    <property type="entry name" value="Cytochrome_P450_fam2"/>
</dbReference>
<dbReference type="PANTHER" id="PTHR24300">
    <property type="entry name" value="CYTOCHROME P450 508A4-RELATED"/>
    <property type="match status" value="1"/>
</dbReference>
<dbReference type="PANTHER" id="PTHR24300:SF88">
    <property type="entry name" value="CYTOCHROME P450 518A1-RELATED"/>
    <property type="match status" value="1"/>
</dbReference>
<dbReference type="Pfam" id="PF00067">
    <property type="entry name" value="p450"/>
    <property type="match status" value="1"/>
</dbReference>
<dbReference type="PRINTS" id="PR00463">
    <property type="entry name" value="EP450I"/>
</dbReference>
<dbReference type="PRINTS" id="PR00385">
    <property type="entry name" value="P450"/>
</dbReference>
<dbReference type="SUPFAM" id="SSF48264">
    <property type="entry name" value="Cytochrome P450"/>
    <property type="match status" value="1"/>
</dbReference>
<comment type="cofactor">
    <cofactor evidence="1">
        <name>heme</name>
        <dbReference type="ChEBI" id="CHEBI:30413"/>
    </cofactor>
</comment>
<comment type="subcellular location">
    <subcellularLocation>
        <location evidence="3">Membrane</location>
        <topology evidence="3">Single-pass membrane protein</topology>
    </subcellularLocation>
</comment>
<comment type="similarity">
    <text evidence="3">Belongs to the cytochrome P450 family.</text>
</comment>
<reference key="1">
    <citation type="journal article" date="2002" name="Nature">
        <title>Sequence and analysis of chromosome 2 of Dictyostelium discoideum.</title>
        <authorList>
            <person name="Gloeckner G."/>
            <person name="Eichinger L."/>
            <person name="Szafranski K."/>
            <person name="Pachebat J.A."/>
            <person name="Bankier A.T."/>
            <person name="Dear P.H."/>
            <person name="Lehmann R."/>
            <person name="Baumgart C."/>
            <person name="Parra G."/>
            <person name="Abril J.F."/>
            <person name="Guigo R."/>
            <person name="Kumpf K."/>
            <person name="Tunggal B."/>
            <person name="Cox E.C."/>
            <person name="Quail M.A."/>
            <person name="Platzer M."/>
            <person name="Rosenthal A."/>
            <person name="Noegel A.A."/>
        </authorList>
    </citation>
    <scope>NUCLEOTIDE SEQUENCE [LARGE SCALE GENOMIC DNA]</scope>
    <source>
        <strain>AX4</strain>
    </source>
</reference>
<reference key="2">
    <citation type="journal article" date="2005" name="Nature">
        <title>The genome of the social amoeba Dictyostelium discoideum.</title>
        <authorList>
            <person name="Eichinger L."/>
            <person name="Pachebat J.A."/>
            <person name="Gloeckner G."/>
            <person name="Rajandream M.A."/>
            <person name="Sucgang R."/>
            <person name="Berriman M."/>
            <person name="Song J."/>
            <person name="Olsen R."/>
            <person name="Szafranski K."/>
            <person name="Xu Q."/>
            <person name="Tunggal B."/>
            <person name="Kummerfeld S."/>
            <person name="Madera M."/>
            <person name="Konfortov B.A."/>
            <person name="Rivero F."/>
            <person name="Bankier A.T."/>
            <person name="Lehmann R."/>
            <person name="Hamlin N."/>
            <person name="Davies R."/>
            <person name="Gaudet P."/>
            <person name="Fey P."/>
            <person name="Pilcher K."/>
            <person name="Chen G."/>
            <person name="Saunders D."/>
            <person name="Sodergren E.J."/>
            <person name="Davis P."/>
            <person name="Kerhornou A."/>
            <person name="Nie X."/>
            <person name="Hall N."/>
            <person name="Anjard C."/>
            <person name="Hemphill L."/>
            <person name="Bason N."/>
            <person name="Farbrother P."/>
            <person name="Desany B."/>
            <person name="Just E."/>
            <person name="Morio T."/>
            <person name="Rost R."/>
            <person name="Churcher C.M."/>
            <person name="Cooper J."/>
            <person name="Haydock S."/>
            <person name="van Driessche N."/>
            <person name="Cronin A."/>
            <person name="Goodhead I."/>
            <person name="Muzny D.M."/>
            <person name="Mourier T."/>
            <person name="Pain A."/>
            <person name="Lu M."/>
            <person name="Harper D."/>
            <person name="Lindsay R."/>
            <person name="Hauser H."/>
            <person name="James K.D."/>
            <person name="Quiles M."/>
            <person name="Madan Babu M."/>
            <person name="Saito T."/>
            <person name="Buchrieser C."/>
            <person name="Wardroper A."/>
            <person name="Felder M."/>
            <person name="Thangavelu M."/>
            <person name="Johnson D."/>
            <person name="Knights A."/>
            <person name="Loulseged H."/>
            <person name="Mungall K.L."/>
            <person name="Oliver K."/>
            <person name="Price C."/>
            <person name="Quail M.A."/>
            <person name="Urushihara H."/>
            <person name="Hernandez J."/>
            <person name="Rabbinowitsch E."/>
            <person name="Steffen D."/>
            <person name="Sanders M."/>
            <person name="Ma J."/>
            <person name="Kohara Y."/>
            <person name="Sharp S."/>
            <person name="Simmonds M.N."/>
            <person name="Spiegler S."/>
            <person name="Tivey A."/>
            <person name="Sugano S."/>
            <person name="White B."/>
            <person name="Walker D."/>
            <person name="Woodward J.R."/>
            <person name="Winckler T."/>
            <person name="Tanaka Y."/>
            <person name="Shaulsky G."/>
            <person name="Schleicher M."/>
            <person name="Weinstock G.M."/>
            <person name="Rosenthal A."/>
            <person name="Cox E.C."/>
            <person name="Chisholm R.L."/>
            <person name="Gibbs R.A."/>
            <person name="Loomis W.F."/>
            <person name="Platzer M."/>
            <person name="Kay R.R."/>
            <person name="Williams J.G."/>
            <person name="Dear P.H."/>
            <person name="Noegel A.A."/>
            <person name="Barrell B.G."/>
            <person name="Kuspa A."/>
        </authorList>
    </citation>
    <scope>NUCLEOTIDE SEQUENCE [LARGE SCALE GENOMIC DNA]</scope>
    <source>
        <strain>AX4</strain>
    </source>
</reference>
<keyword id="KW-0349">Heme</keyword>
<keyword id="KW-0408">Iron</keyword>
<keyword id="KW-0472">Membrane</keyword>
<keyword id="KW-0479">Metal-binding</keyword>
<keyword id="KW-0503">Monooxygenase</keyword>
<keyword id="KW-0560">Oxidoreductase</keyword>
<keyword id="KW-1185">Reference proteome</keyword>
<keyword id="KW-0812">Transmembrane</keyword>
<keyword id="KW-1133">Transmembrane helix</keyword>
<evidence type="ECO:0000250" key="1"/>
<evidence type="ECO:0000255" key="2"/>
<evidence type="ECO:0000305" key="3"/>
<proteinExistence type="inferred from homology"/>
<sequence length="490" mass="57803">MLTNIIILIILYLFYDFCYKNFKYRNYGSPWALPVIGHFIHVINQPHLVVHNDRMKYNNGRFVNYWFGDYLSIAITDPILYKKIYLNFPKQINSRLKSPTVLNISERFRGIISSNENNWDFHHGILSKLFNGHKAKINNFLFEKETKFIIEYMKKISKSGENFDTRSNFLYFYSNILFDYILGKRVENIYENELRKDRKKFMVSIQEVMDSVGLIKFLNYLILSYPFLSIYLRYFTYTTFNLKKILKQYYDEHLETIDLNKPRDVLDNLIMEYKNQNAIECDKSFVAIAIELLAAGTDTNSSTSEWFLTYLVNNPIYQDKIYDELIGALKINKPLKGSDVLINLSHRPLTPLFNATLKEVLRLIPATPFSVPRMSNEGFEVDGIKIPKGTYLFPSMYSIFRDEKYWGENANKFYPERFLTDSHSNNYFPYGVGKRMCLGSNFSQHELYICLTNIVLNFKIKSIDGKPLNEIPNYGITFRPNIFEVKLENR</sequence>
<protein>
    <recommendedName>
        <fullName>Probable cytochrome P450 518B1</fullName>
        <ecNumber>1.14.-.-</ecNumber>
    </recommendedName>
</protein>